<feature type="chain" id="PRO_0000366619" description="Ribosomal RNA large subunit methyltransferase H">
    <location>
        <begin position="1"/>
        <end position="159"/>
    </location>
</feature>
<feature type="binding site" evidence="1">
    <location>
        <position position="108"/>
    </location>
    <ligand>
        <name>S-adenosyl-L-methionine</name>
        <dbReference type="ChEBI" id="CHEBI:59789"/>
    </ligand>
</feature>
<feature type="binding site" evidence="1">
    <location>
        <begin position="127"/>
        <end position="132"/>
    </location>
    <ligand>
        <name>S-adenosyl-L-methionine</name>
        <dbReference type="ChEBI" id="CHEBI:59789"/>
    </ligand>
</feature>
<gene>
    <name evidence="1" type="primary">rlmH</name>
    <name type="ordered locus">Mmc1_3345</name>
</gene>
<accession>A0LCY8</accession>
<proteinExistence type="inferred from homology"/>
<keyword id="KW-0963">Cytoplasm</keyword>
<keyword id="KW-0489">Methyltransferase</keyword>
<keyword id="KW-1185">Reference proteome</keyword>
<keyword id="KW-0698">rRNA processing</keyword>
<keyword id="KW-0949">S-adenosyl-L-methionine</keyword>
<keyword id="KW-0808">Transferase</keyword>
<evidence type="ECO:0000255" key="1">
    <source>
        <dbReference type="HAMAP-Rule" id="MF_00658"/>
    </source>
</evidence>
<reference key="1">
    <citation type="journal article" date="2009" name="Appl. Environ. Microbiol.">
        <title>Complete genome sequence of the chemolithoautotrophic marine magnetotactic coccus strain MC-1.</title>
        <authorList>
            <person name="Schubbe S."/>
            <person name="Williams T.J."/>
            <person name="Xie G."/>
            <person name="Kiss H.E."/>
            <person name="Brettin T.S."/>
            <person name="Martinez D."/>
            <person name="Ross C.A."/>
            <person name="Schuler D."/>
            <person name="Cox B.L."/>
            <person name="Nealson K.H."/>
            <person name="Bazylinski D.A."/>
        </authorList>
    </citation>
    <scope>NUCLEOTIDE SEQUENCE [LARGE SCALE GENOMIC DNA]</scope>
    <source>
        <strain>ATCC BAA-1437 / JCM 17883 / MC-1</strain>
    </source>
</reference>
<comment type="function">
    <text evidence="1">Specifically methylates the pseudouridine at position 1915 (m3Psi1915) in 23S rRNA.</text>
</comment>
<comment type="catalytic activity">
    <reaction evidence="1">
        <text>pseudouridine(1915) in 23S rRNA + S-adenosyl-L-methionine = N(3)-methylpseudouridine(1915) in 23S rRNA + S-adenosyl-L-homocysteine + H(+)</text>
        <dbReference type="Rhea" id="RHEA:42752"/>
        <dbReference type="Rhea" id="RHEA-COMP:10221"/>
        <dbReference type="Rhea" id="RHEA-COMP:10222"/>
        <dbReference type="ChEBI" id="CHEBI:15378"/>
        <dbReference type="ChEBI" id="CHEBI:57856"/>
        <dbReference type="ChEBI" id="CHEBI:59789"/>
        <dbReference type="ChEBI" id="CHEBI:65314"/>
        <dbReference type="ChEBI" id="CHEBI:74486"/>
        <dbReference type="EC" id="2.1.1.177"/>
    </reaction>
</comment>
<comment type="subunit">
    <text evidence="1">Homodimer.</text>
</comment>
<comment type="subcellular location">
    <subcellularLocation>
        <location evidence="1">Cytoplasm</location>
    </subcellularLocation>
</comment>
<comment type="similarity">
    <text evidence="1">Belongs to the RNA methyltransferase RlmH family.</text>
</comment>
<organism>
    <name type="scientific">Magnetococcus marinus (strain ATCC BAA-1437 / JCM 17883 / MC-1)</name>
    <dbReference type="NCBI Taxonomy" id="156889"/>
    <lineage>
        <taxon>Bacteria</taxon>
        <taxon>Pseudomonadati</taxon>
        <taxon>Pseudomonadota</taxon>
        <taxon>Alphaproteobacteria</taxon>
        <taxon>Magnetococcales</taxon>
        <taxon>Magnetococcaceae</taxon>
        <taxon>Magnetococcus</taxon>
    </lineage>
</organism>
<protein>
    <recommendedName>
        <fullName evidence="1">Ribosomal RNA large subunit methyltransferase H</fullName>
        <ecNumber evidence="1">2.1.1.177</ecNumber>
    </recommendedName>
    <alternativeName>
        <fullName evidence="1">23S rRNA (pseudouridine1915-N3)-methyltransferase</fullName>
    </alternativeName>
    <alternativeName>
        <fullName evidence="1">23S rRNA m3Psi1915 methyltransferase</fullName>
    </alternativeName>
    <alternativeName>
        <fullName evidence="1">rRNA (pseudouridine-N3-)-methyltransferase RlmH</fullName>
    </alternativeName>
</protein>
<name>RLMH_MAGMM</name>
<sequence>MSRFRILSVGRGMPKHEKGLFDDYAGRMKRYGGLELVEIAEGQRTGKESPATRSKAIADEGERILEKMDKRLWMALDRGGKLLDSETLAAQLLRWQEAGDRDVGLIIGGPDGLHERVLQGVAFKLAFGPMTFPHMLVRVMLAEQLYRAMTLQHGVPYHR</sequence>
<dbReference type="EC" id="2.1.1.177" evidence="1"/>
<dbReference type="EMBL" id="CP000471">
    <property type="protein sequence ID" value="ABK45831.1"/>
    <property type="molecule type" value="Genomic_DNA"/>
</dbReference>
<dbReference type="RefSeq" id="WP_011714890.1">
    <property type="nucleotide sequence ID" value="NC_008576.1"/>
</dbReference>
<dbReference type="SMR" id="A0LCY8"/>
<dbReference type="STRING" id="156889.Mmc1_3345"/>
<dbReference type="KEGG" id="mgm:Mmc1_3345"/>
<dbReference type="eggNOG" id="COG1576">
    <property type="taxonomic scope" value="Bacteria"/>
</dbReference>
<dbReference type="HOGENOM" id="CLU_100552_1_0_5"/>
<dbReference type="OrthoDB" id="9806643at2"/>
<dbReference type="Proteomes" id="UP000002586">
    <property type="component" value="Chromosome"/>
</dbReference>
<dbReference type="GO" id="GO:0005737">
    <property type="term" value="C:cytoplasm"/>
    <property type="evidence" value="ECO:0007669"/>
    <property type="project" value="UniProtKB-SubCell"/>
</dbReference>
<dbReference type="GO" id="GO:0070038">
    <property type="term" value="F:rRNA (pseudouridine-N3-)-methyltransferase activity"/>
    <property type="evidence" value="ECO:0007669"/>
    <property type="project" value="UniProtKB-UniRule"/>
</dbReference>
<dbReference type="CDD" id="cd18081">
    <property type="entry name" value="RlmH-like"/>
    <property type="match status" value="1"/>
</dbReference>
<dbReference type="Gene3D" id="3.40.1280.10">
    <property type="match status" value="1"/>
</dbReference>
<dbReference type="HAMAP" id="MF_00658">
    <property type="entry name" value="23SrRNA_methyltr_H"/>
    <property type="match status" value="1"/>
</dbReference>
<dbReference type="InterPro" id="IPR029028">
    <property type="entry name" value="Alpha/beta_knot_MTases"/>
</dbReference>
<dbReference type="InterPro" id="IPR003742">
    <property type="entry name" value="RlmH-like"/>
</dbReference>
<dbReference type="InterPro" id="IPR029026">
    <property type="entry name" value="tRNA_m1G_MTases_N"/>
</dbReference>
<dbReference type="PANTHER" id="PTHR33603">
    <property type="entry name" value="METHYLTRANSFERASE"/>
    <property type="match status" value="1"/>
</dbReference>
<dbReference type="PANTHER" id="PTHR33603:SF1">
    <property type="entry name" value="RIBOSOMAL RNA LARGE SUBUNIT METHYLTRANSFERASE H"/>
    <property type="match status" value="1"/>
</dbReference>
<dbReference type="Pfam" id="PF02590">
    <property type="entry name" value="SPOUT_MTase"/>
    <property type="match status" value="1"/>
</dbReference>
<dbReference type="PIRSF" id="PIRSF004505">
    <property type="entry name" value="MT_bac"/>
    <property type="match status" value="1"/>
</dbReference>
<dbReference type="SUPFAM" id="SSF75217">
    <property type="entry name" value="alpha/beta knot"/>
    <property type="match status" value="1"/>
</dbReference>